<organism>
    <name type="scientific">Bacillus thuringiensis (strain Al Hakam)</name>
    <dbReference type="NCBI Taxonomy" id="412694"/>
    <lineage>
        <taxon>Bacteria</taxon>
        <taxon>Bacillati</taxon>
        <taxon>Bacillota</taxon>
        <taxon>Bacilli</taxon>
        <taxon>Bacillales</taxon>
        <taxon>Bacillaceae</taxon>
        <taxon>Bacillus</taxon>
        <taxon>Bacillus cereus group</taxon>
    </lineage>
</organism>
<keyword id="KW-0028">Amino-acid biosynthesis</keyword>
<keyword id="KW-0963">Cytoplasm</keyword>
<keyword id="KW-0554">One-carbon metabolism</keyword>
<keyword id="KW-0663">Pyridoxal phosphate</keyword>
<keyword id="KW-0808">Transferase</keyword>
<feature type="chain" id="PRO_1000006221" description="Serine hydroxymethyltransferase">
    <location>
        <begin position="1"/>
        <end position="414"/>
    </location>
</feature>
<feature type="binding site" evidence="1">
    <location>
        <position position="118"/>
    </location>
    <ligand>
        <name>(6S)-5,6,7,8-tetrahydrofolate</name>
        <dbReference type="ChEBI" id="CHEBI:57453"/>
    </ligand>
</feature>
<feature type="binding site" evidence="1">
    <location>
        <begin position="122"/>
        <end position="124"/>
    </location>
    <ligand>
        <name>(6S)-5,6,7,8-tetrahydrofolate</name>
        <dbReference type="ChEBI" id="CHEBI:57453"/>
    </ligand>
</feature>
<feature type="binding site" evidence="1">
    <location>
        <position position="240"/>
    </location>
    <ligand>
        <name>(6S)-5,6,7,8-tetrahydrofolate</name>
        <dbReference type="ChEBI" id="CHEBI:57453"/>
    </ligand>
</feature>
<feature type="binding site" evidence="1">
    <location>
        <begin position="350"/>
        <end position="352"/>
    </location>
    <ligand>
        <name>(6S)-5,6,7,8-tetrahydrofolate</name>
        <dbReference type="ChEBI" id="CHEBI:57453"/>
    </ligand>
</feature>
<feature type="site" description="Plays an important role in substrate specificity" evidence="1">
    <location>
        <position position="226"/>
    </location>
</feature>
<feature type="modified residue" description="N6-(pyridoxal phosphate)lysine" evidence="1">
    <location>
        <position position="227"/>
    </location>
</feature>
<gene>
    <name evidence="1" type="primary">glyA</name>
    <name type="ordered locus">BALH_4816</name>
</gene>
<dbReference type="EC" id="2.1.2.1" evidence="1"/>
<dbReference type="EMBL" id="CP000485">
    <property type="protein sequence ID" value="ABK87996.1"/>
    <property type="molecule type" value="Genomic_DNA"/>
</dbReference>
<dbReference type="SMR" id="A0RLA3"/>
<dbReference type="KEGG" id="btl:BALH_4816"/>
<dbReference type="HOGENOM" id="CLU_022477_2_1_9"/>
<dbReference type="UniPathway" id="UPA00193"/>
<dbReference type="UniPathway" id="UPA00288">
    <property type="reaction ID" value="UER01023"/>
</dbReference>
<dbReference type="GO" id="GO:0005829">
    <property type="term" value="C:cytosol"/>
    <property type="evidence" value="ECO:0007669"/>
    <property type="project" value="TreeGrafter"/>
</dbReference>
<dbReference type="GO" id="GO:0004372">
    <property type="term" value="F:glycine hydroxymethyltransferase activity"/>
    <property type="evidence" value="ECO:0007669"/>
    <property type="project" value="UniProtKB-UniRule"/>
</dbReference>
<dbReference type="GO" id="GO:0030170">
    <property type="term" value="F:pyridoxal phosphate binding"/>
    <property type="evidence" value="ECO:0007669"/>
    <property type="project" value="UniProtKB-UniRule"/>
</dbReference>
<dbReference type="GO" id="GO:0019264">
    <property type="term" value="P:glycine biosynthetic process from serine"/>
    <property type="evidence" value="ECO:0007669"/>
    <property type="project" value="UniProtKB-UniRule"/>
</dbReference>
<dbReference type="GO" id="GO:0035999">
    <property type="term" value="P:tetrahydrofolate interconversion"/>
    <property type="evidence" value="ECO:0007669"/>
    <property type="project" value="UniProtKB-UniRule"/>
</dbReference>
<dbReference type="CDD" id="cd00378">
    <property type="entry name" value="SHMT"/>
    <property type="match status" value="1"/>
</dbReference>
<dbReference type="FunFam" id="3.40.640.10:FF:000001">
    <property type="entry name" value="Serine hydroxymethyltransferase"/>
    <property type="match status" value="1"/>
</dbReference>
<dbReference type="FunFam" id="3.90.1150.10:FF:000003">
    <property type="entry name" value="Serine hydroxymethyltransferase"/>
    <property type="match status" value="1"/>
</dbReference>
<dbReference type="Gene3D" id="3.90.1150.10">
    <property type="entry name" value="Aspartate Aminotransferase, domain 1"/>
    <property type="match status" value="1"/>
</dbReference>
<dbReference type="Gene3D" id="3.40.640.10">
    <property type="entry name" value="Type I PLP-dependent aspartate aminotransferase-like (Major domain)"/>
    <property type="match status" value="1"/>
</dbReference>
<dbReference type="HAMAP" id="MF_00051">
    <property type="entry name" value="SHMT"/>
    <property type="match status" value="1"/>
</dbReference>
<dbReference type="InterPro" id="IPR015424">
    <property type="entry name" value="PyrdxlP-dep_Trfase"/>
</dbReference>
<dbReference type="InterPro" id="IPR015421">
    <property type="entry name" value="PyrdxlP-dep_Trfase_major"/>
</dbReference>
<dbReference type="InterPro" id="IPR015422">
    <property type="entry name" value="PyrdxlP-dep_Trfase_small"/>
</dbReference>
<dbReference type="InterPro" id="IPR001085">
    <property type="entry name" value="Ser_HO-MeTrfase"/>
</dbReference>
<dbReference type="InterPro" id="IPR049943">
    <property type="entry name" value="Ser_HO-MeTrfase-like"/>
</dbReference>
<dbReference type="InterPro" id="IPR019798">
    <property type="entry name" value="Ser_HO-MeTrfase_PLP_BS"/>
</dbReference>
<dbReference type="InterPro" id="IPR039429">
    <property type="entry name" value="SHMT-like_dom"/>
</dbReference>
<dbReference type="NCBIfam" id="NF000586">
    <property type="entry name" value="PRK00011.1"/>
    <property type="match status" value="1"/>
</dbReference>
<dbReference type="PANTHER" id="PTHR11680">
    <property type="entry name" value="SERINE HYDROXYMETHYLTRANSFERASE"/>
    <property type="match status" value="1"/>
</dbReference>
<dbReference type="PANTHER" id="PTHR11680:SF35">
    <property type="entry name" value="SERINE HYDROXYMETHYLTRANSFERASE 1"/>
    <property type="match status" value="1"/>
</dbReference>
<dbReference type="Pfam" id="PF00464">
    <property type="entry name" value="SHMT"/>
    <property type="match status" value="1"/>
</dbReference>
<dbReference type="PIRSF" id="PIRSF000412">
    <property type="entry name" value="SHMT"/>
    <property type="match status" value="1"/>
</dbReference>
<dbReference type="SUPFAM" id="SSF53383">
    <property type="entry name" value="PLP-dependent transferases"/>
    <property type="match status" value="1"/>
</dbReference>
<dbReference type="PROSITE" id="PS00096">
    <property type="entry name" value="SHMT"/>
    <property type="match status" value="1"/>
</dbReference>
<protein>
    <recommendedName>
        <fullName evidence="1">Serine hydroxymethyltransferase</fullName>
        <shortName evidence="1">SHMT</shortName>
        <shortName evidence="1">Serine methylase</shortName>
        <ecNumber evidence="1">2.1.2.1</ecNumber>
    </recommendedName>
</protein>
<comment type="function">
    <text evidence="1">Catalyzes the reversible interconversion of serine and glycine with tetrahydrofolate (THF) serving as the one-carbon carrier. This reaction serves as the major source of one-carbon groups required for the biosynthesis of purines, thymidylate, methionine, and other important biomolecules. Also exhibits THF-independent aldolase activity toward beta-hydroxyamino acids, producing glycine and aldehydes, via a retro-aldol mechanism.</text>
</comment>
<comment type="catalytic activity">
    <reaction evidence="1">
        <text>(6R)-5,10-methylene-5,6,7,8-tetrahydrofolate + glycine + H2O = (6S)-5,6,7,8-tetrahydrofolate + L-serine</text>
        <dbReference type="Rhea" id="RHEA:15481"/>
        <dbReference type="ChEBI" id="CHEBI:15377"/>
        <dbReference type="ChEBI" id="CHEBI:15636"/>
        <dbReference type="ChEBI" id="CHEBI:33384"/>
        <dbReference type="ChEBI" id="CHEBI:57305"/>
        <dbReference type="ChEBI" id="CHEBI:57453"/>
        <dbReference type="EC" id="2.1.2.1"/>
    </reaction>
</comment>
<comment type="cofactor">
    <cofactor evidence="1">
        <name>pyridoxal 5'-phosphate</name>
        <dbReference type="ChEBI" id="CHEBI:597326"/>
    </cofactor>
</comment>
<comment type="pathway">
    <text evidence="1">One-carbon metabolism; tetrahydrofolate interconversion.</text>
</comment>
<comment type="pathway">
    <text evidence="1">Amino-acid biosynthesis; glycine biosynthesis; glycine from L-serine: step 1/1.</text>
</comment>
<comment type="subunit">
    <text evidence="1">Homodimer.</text>
</comment>
<comment type="subcellular location">
    <subcellularLocation>
        <location evidence="1">Cytoplasm</location>
    </subcellularLocation>
</comment>
<comment type="similarity">
    <text evidence="1">Belongs to the SHMT family.</text>
</comment>
<reference key="1">
    <citation type="journal article" date="2007" name="J. Bacteriol.">
        <title>The complete genome sequence of Bacillus thuringiensis Al Hakam.</title>
        <authorList>
            <person name="Challacombe J.F."/>
            <person name="Altherr M.R."/>
            <person name="Xie G."/>
            <person name="Bhotika S.S."/>
            <person name="Brown N."/>
            <person name="Bruce D."/>
            <person name="Campbell C.S."/>
            <person name="Campbell M.L."/>
            <person name="Chen J."/>
            <person name="Chertkov O."/>
            <person name="Cleland C."/>
            <person name="Dimitrijevic M."/>
            <person name="Doggett N.A."/>
            <person name="Fawcett J.J."/>
            <person name="Glavina T."/>
            <person name="Goodwin L.A."/>
            <person name="Green L.D."/>
            <person name="Han C.S."/>
            <person name="Hill K.K."/>
            <person name="Hitchcock P."/>
            <person name="Jackson P.J."/>
            <person name="Keim P."/>
            <person name="Kewalramani A.R."/>
            <person name="Longmire J."/>
            <person name="Lucas S."/>
            <person name="Malfatti S."/>
            <person name="Martinez D."/>
            <person name="McMurry K."/>
            <person name="Meincke L.J."/>
            <person name="Misra M."/>
            <person name="Moseman B.L."/>
            <person name="Mundt M."/>
            <person name="Munk A.C."/>
            <person name="Okinaka R.T."/>
            <person name="Parson-Quintana B."/>
            <person name="Reilly L.P."/>
            <person name="Richardson P."/>
            <person name="Robinson D.L."/>
            <person name="Saunders E."/>
            <person name="Tapia R."/>
            <person name="Tesmer J.G."/>
            <person name="Thayer N."/>
            <person name="Thompson L.S."/>
            <person name="Tice H."/>
            <person name="Ticknor L.O."/>
            <person name="Wills P.L."/>
            <person name="Gilna P."/>
            <person name="Brettin T.S."/>
        </authorList>
    </citation>
    <scope>NUCLEOTIDE SEQUENCE [LARGE SCALE GENOMIC DNA]</scope>
    <source>
        <strain>Al Hakam</strain>
    </source>
</reference>
<sequence>MVDHLKRQDEKVFAAIEAELGRQRSKIELIASENFVSEAVMEAQGSVLTNKYAEGYPGKRYYGGCEHVDVVEDIARDRVKEIFGAEHVNVQPHSGAQANMAVYFTILEQGDTVLGMNLSHGGHLTHGSPVNFSGVQYNFVEYGVDAESHRINYDDVLAKAKEHKPKLIVAGASAYPRVIDFKRFREIADEVGAYLMVDMAHIAGLVAAGLHPNPVPHAHFVTTTTHKTLRGPRGGMILCEEQFAKQIDKSIFPGIQGGPLMHVIAAKAVAFGEALQDDFKTYAQNIINNANRLAEGLQKEGLTLVSGGTDNHLILIDVRNLEITGKVAEHVLDEVGITVNKNTIPFETASPFVTSGVRIGTAAVTSRGFGLEDMDEIASLIAYTLKNHENEAALEEARKRVEALTSKFPMYTDL</sequence>
<name>GLYA_BACAH</name>
<accession>A0RLA3</accession>
<evidence type="ECO:0000255" key="1">
    <source>
        <dbReference type="HAMAP-Rule" id="MF_00051"/>
    </source>
</evidence>
<proteinExistence type="inferred from homology"/>